<keyword id="KW-0963">Cytoplasm</keyword>
<keyword id="KW-1185">Reference proteome</keyword>
<keyword id="KW-0677">Repeat</keyword>
<keyword id="KW-0678">Repressor</keyword>
<keyword id="KW-0804">Transcription</keyword>
<keyword id="KW-0805">Transcription regulation</keyword>
<feature type="initiator methionine" description="Removed" evidence="1">
    <location>
        <position position="1"/>
    </location>
</feature>
<feature type="chain" id="PRO_0000087449" description="Glycine cleavage system transcriptional repressor">
    <location>
        <begin position="2"/>
        <end position="190"/>
    </location>
</feature>
<feature type="domain" description="ACT 1" evidence="2">
    <location>
        <begin position="10"/>
        <end position="91"/>
    </location>
</feature>
<feature type="domain" description="ACT 2" evidence="2">
    <location>
        <begin position="97"/>
        <end position="176"/>
    </location>
</feature>
<name>GCVR_SHIFL</name>
<sequence>MTLSSQHYLVITALGADRPGIVNTITRHVSSCGCNIEDSRLAMLGEEFTFIMLLSGSWNAITLIESTLPLKGAELDLLIVMKRTTARPRPPMPASVWVQVDVADSPHLIERFTALFDAHHMNIAELVSRTQPAENERAAQLHIQITAHSPASADAANIEQAFKALCTELNAQGSINVVNYSQHDEQDGVK</sequence>
<gene>
    <name type="primary">gcvR</name>
    <name type="ordered locus">SF2522</name>
    <name type="ordered locus">S2672</name>
</gene>
<evidence type="ECO:0000250" key="1"/>
<evidence type="ECO:0000255" key="2">
    <source>
        <dbReference type="PROSITE-ProRule" id="PRU01007"/>
    </source>
</evidence>
<evidence type="ECO:0000305" key="3"/>
<reference key="1">
    <citation type="journal article" date="2002" name="Nucleic Acids Res.">
        <title>Genome sequence of Shigella flexneri 2a: insights into pathogenicity through comparison with genomes of Escherichia coli K12 and O157.</title>
        <authorList>
            <person name="Jin Q."/>
            <person name="Yuan Z."/>
            <person name="Xu J."/>
            <person name="Wang Y."/>
            <person name="Shen Y."/>
            <person name="Lu W."/>
            <person name="Wang J."/>
            <person name="Liu H."/>
            <person name="Yang J."/>
            <person name="Yang F."/>
            <person name="Zhang X."/>
            <person name="Zhang J."/>
            <person name="Yang G."/>
            <person name="Wu H."/>
            <person name="Qu D."/>
            <person name="Dong J."/>
            <person name="Sun L."/>
            <person name="Xue Y."/>
            <person name="Zhao A."/>
            <person name="Gao Y."/>
            <person name="Zhu J."/>
            <person name="Kan B."/>
            <person name="Ding K."/>
            <person name="Chen S."/>
            <person name="Cheng H."/>
            <person name="Yao Z."/>
            <person name="He B."/>
            <person name="Chen R."/>
            <person name="Ma D."/>
            <person name="Qiang B."/>
            <person name="Wen Y."/>
            <person name="Hou Y."/>
            <person name="Yu J."/>
        </authorList>
    </citation>
    <scope>NUCLEOTIDE SEQUENCE [LARGE SCALE GENOMIC DNA]</scope>
    <source>
        <strain>301 / Serotype 2a</strain>
    </source>
</reference>
<reference key="2">
    <citation type="journal article" date="2003" name="Infect. Immun.">
        <title>Complete genome sequence and comparative genomics of Shigella flexneri serotype 2a strain 2457T.</title>
        <authorList>
            <person name="Wei J."/>
            <person name="Goldberg M.B."/>
            <person name="Burland V."/>
            <person name="Venkatesan M.M."/>
            <person name="Deng W."/>
            <person name="Fournier G."/>
            <person name="Mayhew G.F."/>
            <person name="Plunkett G. III"/>
            <person name="Rose D.J."/>
            <person name="Darling A."/>
            <person name="Mau B."/>
            <person name="Perna N.T."/>
            <person name="Payne S.M."/>
            <person name="Runyen-Janecky L.J."/>
            <person name="Zhou S."/>
            <person name="Schwartz D.C."/>
            <person name="Blattner F.R."/>
        </authorList>
    </citation>
    <scope>NUCLEOTIDE SEQUENCE [LARGE SCALE GENOMIC DNA]</scope>
    <source>
        <strain>ATCC 700930 / 2457T / Serotype 2a</strain>
    </source>
</reference>
<organism>
    <name type="scientific">Shigella flexneri</name>
    <dbReference type="NCBI Taxonomy" id="623"/>
    <lineage>
        <taxon>Bacteria</taxon>
        <taxon>Pseudomonadati</taxon>
        <taxon>Pseudomonadota</taxon>
        <taxon>Gammaproteobacteria</taxon>
        <taxon>Enterobacterales</taxon>
        <taxon>Enterobacteriaceae</taxon>
        <taxon>Shigella</taxon>
    </lineage>
</organism>
<dbReference type="EMBL" id="AE005674">
    <property type="protein sequence ID" value="AAN44025.1"/>
    <property type="molecule type" value="Genomic_DNA"/>
</dbReference>
<dbReference type="EMBL" id="AE014073">
    <property type="status" value="NOT_ANNOTATED_CDS"/>
    <property type="molecule type" value="Genomic_DNA"/>
</dbReference>
<dbReference type="RefSeq" id="NP_708318.1">
    <property type="nucleotide sequence ID" value="NC_004337.2"/>
</dbReference>
<dbReference type="RefSeq" id="WP_000176187.1">
    <property type="nucleotide sequence ID" value="NZ_WPGW01000011.1"/>
</dbReference>
<dbReference type="SMR" id="P0A9I4"/>
<dbReference type="STRING" id="198214.SF2522"/>
<dbReference type="PaxDb" id="198214-SF2522"/>
<dbReference type="GeneID" id="1025873"/>
<dbReference type="KEGG" id="sfl:SF2522"/>
<dbReference type="PATRIC" id="fig|198214.7.peg.3015"/>
<dbReference type="HOGENOM" id="CLU_095322_0_0_6"/>
<dbReference type="Proteomes" id="UP000001006">
    <property type="component" value="Chromosome"/>
</dbReference>
<dbReference type="Proteomes" id="UP000002673">
    <property type="component" value="Chromosome"/>
</dbReference>
<dbReference type="GO" id="GO:0005737">
    <property type="term" value="C:cytoplasm"/>
    <property type="evidence" value="ECO:0007669"/>
    <property type="project" value="UniProtKB-SubCell"/>
</dbReference>
<dbReference type="GO" id="GO:0006355">
    <property type="term" value="P:regulation of DNA-templated transcription"/>
    <property type="evidence" value="ECO:0007669"/>
    <property type="project" value="InterPro"/>
</dbReference>
<dbReference type="CDD" id="cd04893">
    <property type="entry name" value="ACT_GcvR_1"/>
    <property type="match status" value="1"/>
</dbReference>
<dbReference type="FunFam" id="3.30.70.260:FF:000005">
    <property type="entry name" value="Glycine cleavage system transcriptional repressor"/>
    <property type="match status" value="1"/>
</dbReference>
<dbReference type="FunFam" id="3.30.70.260:FF:000015">
    <property type="entry name" value="Glycine cleavage system transcriptional repressor"/>
    <property type="match status" value="1"/>
</dbReference>
<dbReference type="Gene3D" id="3.30.70.260">
    <property type="match status" value="2"/>
</dbReference>
<dbReference type="InterPro" id="IPR045865">
    <property type="entry name" value="ACT-like_dom_sf"/>
</dbReference>
<dbReference type="InterPro" id="IPR002912">
    <property type="entry name" value="ACT_dom"/>
</dbReference>
<dbReference type="InterPro" id="IPR016867">
    <property type="entry name" value="GcvR"/>
</dbReference>
<dbReference type="InterPro" id="IPR050990">
    <property type="entry name" value="UPF0237/GcvR_regulator"/>
</dbReference>
<dbReference type="NCBIfam" id="NF008612">
    <property type="entry name" value="PRK11589.1"/>
    <property type="match status" value="1"/>
</dbReference>
<dbReference type="PANTHER" id="PTHR34875:SF5">
    <property type="entry name" value="GLYCINE CLEAVAGE SYSTEM TRANSCRIPTIONAL REPRESSOR"/>
    <property type="match status" value="1"/>
</dbReference>
<dbReference type="PANTHER" id="PTHR34875">
    <property type="entry name" value="UPF0237 PROTEIN MJ1558"/>
    <property type="match status" value="1"/>
</dbReference>
<dbReference type="Pfam" id="PF13740">
    <property type="entry name" value="ACT_6"/>
    <property type="match status" value="1"/>
</dbReference>
<dbReference type="PIRSF" id="PIRSF028103">
    <property type="entry name" value="GcvR"/>
    <property type="match status" value="1"/>
</dbReference>
<dbReference type="SUPFAM" id="SSF55021">
    <property type="entry name" value="ACT-like"/>
    <property type="match status" value="2"/>
</dbReference>
<dbReference type="PROSITE" id="PS51671">
    <property type="entry name" value="ACT"/>
    <property type="match status" value="2"/>
</dbReference>
<accession>P0A9I4</accession>
<accession>O30979</accession>
<accession>P23483</accession>
<accession>P77652</accession>
<comment type="function">
    <text evidence="1">Possible negative transcriptional regulator of the glycine cleavage system operon (GCV).</text>
</comment>
<comment type="subcellular location">
    <subcellularLocation>
        <location evidence="3">Cytoplasm</location>
    </subcellularLocation>
</comment>
<proteinExistence type="inferred from homology"/>
<protein>
    <recommendedName>
        <fullName>Glycine cleavage system transcriptional repressor</fullName>
    </recommendedName>
    <alternativeName>
        <fullName>Gcv operon repressor</fullName>
    </alternativeName>
</protein>